<proteinExistence type="inferred from homology"/>
<evidence type="ECO:0000255" key="1">
    <source>
        <dbReference type="HAMAP-Rule" id="MF_01710"/>
    </source>
</evidence>
<gene>
    <name evidence="1" type="primary">ecfA2</name>
    <name type="synonym">cbiO2</name>
    <name type="ordered locus">SAG2150</name>
</gene>
<sequence length="280" mass="31111">MGIEFKNVSYTYQAGTPFEGRALFDVNLKIEDASYTAFIGHTGSGKSTIMQLLNGLHIPTKGEVIVDDFSIKAGDKNKEIKFIRQKVGLVFQFPESQLFEETVLKDVAFGPQNFGISQIEAERLAEEKLRLVGISEDLFDKNPFELSGGQMRRVAIAGILAMEPKVLVLDEPTAGLDPKGRKELMTLFKNLHKKGMTIVLVTHLMDDVADYADYVYVLEAGKVTLSGQPKQIFQEVELLESKQLGVPKITKFAQRLSHKGLNLPSLPITINEFVEAIKHG</sequence>
<name>ECFA2_STRA5</name>
<reference key="1">
    <citation type="journal article" date="2002" name="Proc. Natl. Acad. Sci. U.S.A.">
        <title>Complete genome sequence and comparative genomic analysis of an emerging human pathogen, serotype V Streptococcus agalactiae.</title>
        <authorList>
            <person name="Tettelin H."/>
            <person name="Masignani V."/>
            <person name="Cieslewicz M.J."/>
            <person name="Eisen J.A."/>
            <person name="Peterson S.N."/>
            <person name="Wessels M.R."/>
            <person name="Paulsen I.T."/>
            <person name="Nelson K.E."/>
            <person name="Margarit I."/>
            <person name="Read T.D."/>
            <person name="Madoff L.C."/>
            <person name="Wolf A.M."/>
            <person name="Beanan M.J."/>
            <person name="Brinkac L.M."/>
            <person name="Daugherty S.C."/>
            <person name="DeBoy R.T."/>
            <person name="Durkin A.S."/>
            <person name="Kolonay J.F."/>
            <person name="Madupu R."/>
            <person name="Lewis M.R."/>
            <person name="Radune D."/>
            <person name="Fedorova N.B."/>
            <person name="Scanlan D."/>
            <person name="Khouri H.M."/>
            <person name="Mulligan S."/>
            <person name="Carty H.A."/>
            <person name="Cline R.T."/>
            <person name="Van Aken S.E."/>
            <person name="Gill J."/>
            <person name="Scarselli M."/>
            <person name="Mora M."/>
            <person name="Iacobini E.T."/>
            <person name="Brettoni C."/>
            <person name="Galli G."/>
            <person name="Mariani M."/>
            <person name="Vegni F."/>
            <person name="Maione D."/>
            <person name="Rinaudo D."/>
            <person name="Rappuoli R."/>
            <person name="Telford J.L."/>
            <person name="Kasper D.L."/>
            <person name="Grandi G."/>
            <person name="Fraser C.M."/>
        </authorList>
    </citation>
    <scope>NUCLEOTIDE SEQUENCE [LARGE SCALE GENOMIC DNA]</scope>
    <source>
        <strain>ATCC BAA-611 / 2603 V/R</strain>
    </source>
</reference>
<comment type="function">
    <text evidence="1">ATP-binding (A) component of a common energy-coupling factor (ECF) ABC-transporter complex. Unlike classic ABC transporters this ECF transporter provides the energy necessary to transport a number of different substrates.</text>
</comment>
<comment type="subunit">
    <text evidence="1">Forms a stable energy-coupling factor (ECF) transporter complex composed of 2 membrane-embedded substrate-binding proteins (S component), 2 ATP-binding proteins (A component) and 2 transmembrane proteins (T component).</text>
</comment>
<comment type="subcellular location">
    <subcellularLocation>
        <location evidence="1">Cell membrane</location>
        <topology evidence="1">Peripheral membrane protein</topology>
    </subcellularLocation>
</comment>
<comment type="similarity">
    <text evidence="1">Belongs to the ABC transporter superfamily. Energy-coupling factor EcfA family.</text>
</comment>
<organism>
    <name type="scientific">Streptococcus agalactiae serotype V (strain ATCC BAA-611 / 2603 V/R)</name>
    <dbReference type="NCBI Taxonomy" id="208435"/>
    <lineage>
        <taxon>Bacteria</taxon>
        <taxon>Bacillati</taxon>
        <taxon>Bacillota</taxon>
        <taxon>Bacilli</taxon>
        <taxon>Lactobacillales</taxon>
        <taxon>Streptococcaceae</taxon>
        <taxon>Streptococcus</taxon>
    </lineage>
</organism>
<accession>Q8DWR4</accession>
<protein>
    <recommendedName>
        <fullName evidence="1">Energy-coupling factor transporter ATP-binding protein EcfA2</fullName>
        <shortName evidence="1">ECF transporter A component EcfA2</shortName>
        <ecNumber evidence="1">7.-.-.-</ecNumber>
    </recommendedName>
</protein>
<keyword id="KW-0067">ATP-binding</keyword>
<keyword id="KW-1003">Cell membrane</keyword>
<keyword id="KW-0472">Membrane</keyword>
<keyword id="KW-0547">Nucleotide-binding</keyword>
<keyword id="KW-1185">Reference proteome</keyword>
<keyword id="KW-1278">Translocase</keyword>
<keyword id="KW-0813">Transport</keyword>
<feature type="chain" id="PRO_0000092087" description="Energy-coupling factor transporter ATP-binding protein EcfA2">
    <location>
        <begin position="1"/>
        <end position="280"/>
    </location>
</feature>
<feature type="domain" description="ABC transporter" evidence="1">
    <location>
        <begin position="3"/>
        <end position="245"/>
    </location>
</feature>
<feature type="binding site" evidence="1">
    <location>
        <begin position="40"/>
        <end position="47"/>
    </location>
    <ligand>
        <name>ATP</name>
        <dbReference type="ChEBI" id="CHEBI:30616"/>
    </ligand>
</feature>
<dbReference type="EC" id="7.-.-.-" evidence="1"/>
<dbReference type="EMBL" id="AE009948">
    <property type="protein sequence ID" value="AAN01008.1"/>
    <property type="molecule type" value="Genomic_DNA"/>
</dbReference>
<dbReference type="RefSeq" id="NP_689135.1">
    <property type="nucleotide sequence ID" value="NC_004116.1"/>
</dbReference>
<dbReference type="RefSeq" id="WP_000510606.1">
    <property type="nucleotide sequence ID" value="NC_004116.1"/>
</dbReference>
<dbReference type="SMR" id="Q8DWR4"/>
<dbReference type="STRING" id="208435.SAG2150"/>
<dbReference type="KEGG" id="sag:SAG2150"/>
<dbReference type="PATRIC" id="fig|208435.3.peg.2153"/>
<dbReference type="HOGENOM" id="CLU_000604_1_22_9"/>
<dbReference type="OrthoDB" id="9784332at2"/>
<dbReference type="Proteomes" id="UP000000821">
    <property type="component" value="Chromosome"/>
</dbReference>
<dbReference type="GO" id="GO:0043190">
    <property type="term" value="C:ATP-binding cassette (ABC) transporter complex"/>
    <property type="evidence" value="ECO:0007669"/>
    <property type="project" value="TreeGrafter"/>
</dbReference>
<dbReference type="GO" id="GO:0005524">
    <property type="term" value="F:ATP binding"/>
    <property type="evidence" value="ECO:0007669"/>
    <property type="project" value="UniProtKB-KW"/>
</dbReference>
<dbReference type="GO" id="GO:0016887">
    <property type="term" value="F:ATP hydrolysis activity"/>
    <property type="evidence" value="ECO:0007669"/>
    <property type="project" value="InterPro"/>
</dbReference>
<dbReference type="GO" id="GO:0042626">
    <property type="term" value="F:ATPase-coupled transmembrane transporter activity"/>
    <property type="evidence" value="ECO:0007669"/>
    <property type="project" value="TreeGrafter"/>
</dbReference>
<dbReference type="CDD" id="cd03225">
    <property type="entry name" value="ABC_cobalt_CbiO_domain1"/>
    <property type="match status" value="1"/>
</dbReference>
<dbReference type="FunFam" id="3.40.50.300:FF:000224">
    <property type="entry name" value="Energy-coupling factor transporter ATP-binding protein EcfA"/>
    <property type="match status" value="1"/>
</dbReference>
<dbReference type="Gene3D" id="3.40.50.300">
    <property type="entry name" value="P-loop containing nucleotide triphosphate hydrolases"/>
    <property type="match status" value="1"/>
</dbReference>
<dbReference type="InterPro" id="IPR003593">
    <property type="entry name" value="AAA+_ATPase"/>
</dbReference>
<dbReference type="InterPro" id="IPR003439">
    <property type="entry name" value="ABC_transporter-like_ATP-bd"/>
</dbReference>
<dbReference type="InterPro" id="IPR017871">
    <property type="entry name" value="ABC_transporter-like_CS"/>
</dbReference>
<dbReference type="InterPro" id="IPR015856">
    <property type="entry name" value="ABC_transpr_CbiO/EcfA_su"/>
</dbReference>
<dbReference type="InterPro" id="IPR050095">
    <property type="entry name" value="ECF_ABC_transporter_ATP-bd"/>
</dbReference>
<dbReference type="InterPro" id="IPR030946">
    <property type="entry name" value="EcfA2"/>
</dbReference>
<dbReference type="InterPro" id="IPR027417">
    <property type="entry name" value="P-loop_NTPase"/>
</dbReference>
<dbReference type="NCBIfam" id="TIGR04521">
    <property type="entry name" value="ECF_ATPase_2"/>
    <property type="match status" value="1"/>
</dbReference>
<dbReference type="PANTHER" id="PTHR43553:SF27">
    <property type="entry name" value="ENERGY-COUPLING FACTOR TRANSPORTER ATP-BINDING PROTEIN ECFA2"/>
    <property type="match status" value="1"/>
</dbReference>
<dbReference type="PANTHER" id="PTHR43553">
    <property type="entry name" value="HEAVY METAL TRANSPORTER"/>
    <property type="match status" value="1"/>
</dbReference>
<dbReference type="Pfam" id="PF00005">
    <property type="entry name" value="ABC_tran"/>
    <property type="match status" value="1"/>
</dbReference>
<dbReference type="SMART" id="SM00382">
    <property type="entry name" value="AAA"/>
    <property type="match status" value="1"/>
</dbReference>
<dbReference type="SUPFAM" id="SSF52540">
    <property type="entry name" value="P-loop containing nucleoside triphosphate hydrolases"/>
    <property type="match status" value="1"/>
</dbReference>
<dbReference type="PROSITE" id="PS00211">
    <property type="entry name" value="ABC_TRANSPORTER_1"/>
    <property type="match status" value="1"/>
</dbReference>
<dbReference type="PROSITE" id="PS50893">
    <property type="entry name" value="ABC_TRANSPORTER_2"/>
    <property type="match status" value="1"/>
</dbReference>
<dbReference type="PROSITE" id="PS51246">
    <property type="entry name" value="CBIO"/>
    <property type="match status" value="1"/>
</dbReference>